<gene>
    <name type="primary">tnc-2</name>
    <name type="ORF">ZK673.7</name>
</gene>
<proteinExistence type="evidence at transcript level"/>
<sequence>MGDVVADALEKLSADQIEQFRKYFNMFDKEGKGYIRATQVGQILRTMGQAFEERDLKQLIKEFDADGSGEIEFEEFAAMVANFVVNNENDEGLEEELREAFRLYDKEGNGYINVSDLRDILRALDDNVSEEELDEMIAEIDADGSGTVDFDEFMEMMSGE</sequence>
<organism>
    <name type="scientific">Caenorhabditis elegans</name>
    <dbReference type="NCBI Taxonomy" id="6239"/>
    <lineage>
        <taxon>Eukaryota</taxon>
        <taxon>Metazoa</taxon>
        <taxon>Ecdysozoa</taxon>
        <taxon>Nematoda</taxon>
        <taxon>Chromadorea</taxon>
        <taxon>Rhabditida</taxon>
        <taxon>Rhabditina</taxon>
        <taxon>Rhabditomorpha</taxon>
        <taxon>Rhabditoidea</taxon>
        <taxon>Rhabditidae</taxon>
        <taxon>Peloderinae</taxon>
        <taxon>Caenorhabditis</taxon>
    </lineage>
</organism>
<reference key="1">
    <citation type="submission" date="2002-02" db="EMBL/GenBank/DDBJ databases">
        <title>Functional characterization of the pharyngeal troponin C of Caenorhabditis elegans.</title>
        <authorList>
            <person name="Terami H."/>
            <person name="Kagawa H."/>
        </authorList>
    </citation>
    <scope>NUCLEOTIDE SEQUENCE [GENOMIC DNA]</scope>
    <source>
        <strain>Bristol N2</strain>
        <tissue>Pharyngeal muscle</tissue>
    </source>
</reference>
<reference key="2">
    <citation type="journal article" date="1998" name="Science">
        <title>Genome sequence of the nematode C. elegans: a platform for investigating biology.</title>
        <authorList>
            <consortium name="The C. elegans sequencing consortium"/>
        </authorList>
    </citation>
    <scope>NUCLEOTIDE SEQUENCE [LARGE SCALE GENOMIC DNA]</scope>
    <source>
        <strain>Bristol N2</strain>
    </source>
</reference>
<dbReference type="EMBL" id="AB079299">
    <property type="protein sequence ID" value="BAB84566.1"/>
    <property type="molecule type" value="Genomic_DNA"/>
</dbReference>
<dbReference type="EMBL" id="Z48585">
    <property type="protein sequence ID" value="CAA88482.1"/>
    <property type="molecule type" value="Genomic_DNA"/>
</dbReference>
<dbReference type="PIR" id="T27963">
    <property type="entry name" value="T27963"/>
</dbReference>
<dbReference type="RefSeq" id="NP_496251.1">
    <property type="nucleotide sequence ID" value="NM_063850.6"/>
</dbReference>
<dbReference type="SMR" id="Q09665"/>
<dbReference type="BioGRID" id="39930">
    <property type="interactions" value="13"/>
</dbReference>
<dbReference type="DIP" id="DIP-25700N"/>
<dbReference type="FunCoup" id="Q09665">
    <property type="interactions" value="209"/>
</dbReference>
<dbReference type="IntAct" id="Q09665">
    <property type="interactions" value="3"/>
</dbReference>
<dbReference type="STRING" id="6239.ZK673.7.1"/>
<dbReference type="PaxDb" id="6239-ZK673.7"/>
<dbReference type="PeptideAtlas" id="Q09665"/>
<dbReference type="EnsemblMetazoa" id="ZK673.7.1">
    <property type="protein sequence ID" value="ZK673.7.1"/>
    <property type="gene ID" value="WBGene00006583"/>
</dbReference>
<dbReference type="GeneID" id="174612"/>
<dbReference type="KEGG" id="cel:CELE_ZK673.7"/>
<dbReference type="UCSC" id="ZK673.7.1">
    <property type="organism name" value="c. elegans"/>
</dbReference>
<dbReference type="AGR" id="WB:WBGene00006583"/>
<dbReference type="CTD" id="174612"/>
<dbReference type="WormBase" id="ZK673.7">
    <property type="protein sequence ID" value="CE01719"/>
    <property type="gene ID" value="WBGene00006583"/>
    <property type="gene designation" value="tnc-2"/>
</dbReference>
<dbReference type="eggNOG" id="KOG0027">
    <property type="taxonomic scope" value="Eukaryota"/>
</dbReference>
<dbReference type="GeneTree" id="ENSGT00940000172595"/>
<dbReference type="HOGENOM" id="CLU_061288_2_4_1"/>
<dbReference type="InParanoid" id="Q09665"/>
<dbReference type="OMA" id="PQELDMM"/>
<dbReference type="OrthoDB" id="26525at2759"/>
<dbReference type="PhylomeDB" id="Q09665"/>
<dbReference type="PRO" id="PR:Q09665"/>
<dbReference type="Proteomes" id="UP000001940">
    <property type="component" value="Chromosome II"/>
</dbReference>
<dbReference type="Bgee" id="WBGene00006583">
    <property type="expression patterns" value="Expressed in pharyngeal muscle cell (C elegans) and 3 other cell types or tissues"/>
</dbReference>
<dbReference type="GO" id="GO:0005813">
    <property type="term" value="C:centrosome"/>
    <property type="evidence" value="ECO:0000318"/>
    <property type="project" value="GO_Central"/>
</dbReference>
<dbReference type="GO" id="GO:0005737">
    <property type="term" value="C:cytoplasm"/>
    <property type="evidence" value="ECO:0000318"/>
    <property type="project" value="GO_Central"/>
</dbReference>
<dbReference type="GO" id="GO:0005509">
    <property type="term" value="F:calcium ion binding"/>
    <property type="evidence" value="ECO:0000318"/>
    <property type="project" value="GO_Central"/>
</dbReference>
<dbReference type="GO" id="GO:0031013">
    <property type="term" value="F:troponin I binding"/>
    <property type="evidence" value="ECO:0000353"/>
    <property type="project" value="WormBase"/>
</dbReference>
<dbReference type="CDD" id="cd00051">
    <property type="entry name" value="EFh"/>
    <property type="match status" value="1"/>
</dbReference>
<dbReference type="FunFam" id="1.10.238.10:FF:000336">
    <property type="entry name" value="HLH domain-containing protein"/>
    <property type="match status" value="1"/>
</dbReference>
<dbReference type="FunFam" id="1.10.238.10:FF:000963">
    <property type="entry name" value="Troponin C, isoform 2"/>
    <property type="match status" value="1"/>
</dbReference>
<dbReference type="Gene3D" id="1.10.238.10">
    <property type="entry name" value="EF-hand"/>
    <property type="match status" value="3"/>
</dbReference>
<dbReference type="InterPro" id="IPR050230">
    <property type="entry name" value="CALM/Myosin/TropC-like"/>
</dbReference>
<dbReference type="InterPro" id="IPR011992">
    <property type="entry name" value="EF-hand-dom_pair"/>
</dbReference>
<dbReference type="InterPro" id="IPR018247">
    <property type="entry name" value="EF_Hand_1_Ca_BS"/>
</dbReference>
<dbReference type="InterPro" id="IPR002048">
    <property type="entry name" value="EF_hand_dom"/>
</dbReference>
<dbReference type="PANTHER" id="PTHR23048:SF0">
    <property type="entry name" value="CALMODULIN LIKE 3"/>
    <property type="match status" value="1"/>
</dbReference>
<dbReference type="PANTHER" id="PTHR23048">
    <property type="entry name" value="MYOSIN LIGHT CHAIN 1, 3"/>
    <property type="match status" value="1"/>
</dbReference>
<dbReference type="Pfam" id="PF13499">
    <property type="entry name" value="EF-hand_7"/>
    <property type="match status" value="2"/>
</dbReference>
<dbReference type="SMART" id="SM00054">
    <property type="entry name" value="EFh"/>
    <property type="match status" value="4"/>
</dbReference>
<dbReference type="SUPFAM" id="SSF47473">
    <property type="entry name" value="EF-hand"/>
    <property type="match status" value="1"/>
</dbReference>
<dbReference type="PROSITE" id="PS00018">
    <property type="entry name" value="EF_HAND_1"/>
    <property type="match status" value="2"/>
</dbReference>
<dbReference type="PROSITE" id="PS50222">
    <property type="entry name" value="EF_HAND_2"/>
    <property type="match status" value="4"/>
</dbReference>
<accession>Q09665</accession>
<feature type="chain" id="PRO_0000073685" description="Troponin C, isoform 2">
    <location>
        <begin position="1"/>
        <end position="160"/>
    </location>
</feature>
<feature type="domain" description="EF-hand 1" evidence="1">
    <location>
        <begin position="15"/>
        <end position="50"/>
    </location>
</feature>
<feature type="domain" description="EF-hand 2" evidence="1">
    <location>
        <begin position="51"/>
        <end position="86"/>
    </location>
</feature>
<feature type="domain" description="EF-hand 3" evidence="1">
    <location>
        <begin position="92"/>
        <end position="127"/>
    </location>
</feature>
<feature type="domain" description="EF-hand 4" evidence="1">
    <location>
        <begin position="128"/>
        <end position="160"/>
    </location>
</feature>
<feature type="binding site" evidence="1">
    <location>
        <position position="64"/>
    </location>
    <ligand>
        <name>Ca(2+)</name>
        <dbReference type="ChEBI" id="CHEBI:29108"/>
        <label>1</label>
    </ligand>
</feature>
<feature type="binding site" evidence="1">
    <location>
        <position position="66"/>
    </location>
    <ligand>
        <name>Ca(2+)</name>
        <dbReference type="ChEBI" id="CHEBI:29108"/>
        <label>1</label>
    </ligand>
</feature>
<feature type="binding site" evidence="1">
    <location>
        <position position="68"/>
    </location>
    <ligand>
        <name>Ca(2+)</name>
        <dbReference type="ChEBI" id="CHEBI:29108"/>
        <label>1</label>
    </ligand>
</feature>
<feature type="binding site" evidence="1">
    <location>
        <position position="70"/>
    </location>
    <ligand>
        <name>Ca(2+)</name>
        <dbReference type="ChEBI" id="CHEBI:29108"/>
        <label>1</label>
    </ligand>
</feature>
<feature type="binding site" evidence="1">
    <location>
        <position position="75"/>
    </location>
    <ligand>
        <name>Ca(2+)</name>
        <dbReference type="ChEBI" id="CHEBI:29108"/>
        <label>1</label>
    </ligand>
</feature>
<feature type="binding site" evidence="1">
    <location>
        <position position="141"/>
    </location>
    <ligand>
        <name>Ca(2+)</name>
        <dbReference type="ChEBI" id="CHEBI:29108"/>
        <label>2</label>
    </ligand>
</feature>
<feature type="binding site" evidence="1">
    <location>
        <position position="143"/>
    </location>
    <ligand>
        <name>Ca(2+)</name>
        <dbReference type="ChEBI" id="CHEBI:29108"/>
        <label>2</label>
    </ligand>
</feature>
<feature type="binding site" evidence="1">
    <location>
        <position position="145"/>
    </location>
    <ligand>
        <name>Ca(2+)</name>
        <dbReference type="ChEBI" id="CHEBI:29108"/>
        <label>2</label>
    </ligand>
</feature>
<feature type="binding site" evidence="1">
    <location>
        <position position="147"/>
    </location>
    <ligand>
        <name>Ca(2+)</name>
        <dbReference type="ChEBI" id="CHEBI:29108"/>
        <label>2</label>
    </ligand>
</feature>
<feature type="binding site" evidence="1">
    <location>
        <position position="152"/>
    </location>
    <ligand>
        <name>Ca(2+)</name>
        <dbReference type="ChEBI" id="CHEBI:29108"/>
        <label>2</label>
    </ligand>
</feature>
<name>TNNC2_CAEEL</name>
<comment type="tissue specificity">
    <text>Pharyngeal muscle.</text>
</comment>
<comment type="miscellaneous">
    <text evidence="2">This protein binds two calcium ions.</text>
</comment>
<comment type="similarity">
    <text evidence="2">Belongs to the troponin C family.</text>
</comment>
<evidence type="ECO:0000255" key="1">
    <source>
        <dbReference type="PROSITE-ProRule" id="PRU00448"/>
    </source>
</evidence>
<evidence type="ECO:0000305" key="2"/>
<keyword id="KW-0106">Calcium</keyword>
<keyword id="KW-0479">Metal-binding</keyword>
<keyword id="KW-1185">Reference proteome</keyword>
<keyword id="KW-0677">Repeat</keyword>
<protein>
    <recommendedName>
        <fullName>Troponin C, isoform 2</fullName>
    </recommendedName>
</protein>